<reference key="1">
    <citation type="journal article" date="2002" name="Proc. Natl. Acad. Sci. U.S.A.">
        <title>Complete genome sequence and comparative genomic analysis of an emerging human pathogen, serotype V Streptococcus agalactiae.</title>
        <authorList>
            <person name="Tettelin H."/>
            <person name="Masignani V."/>
            <person name="Cieslewicz M.J."/>
            <person name="Eisen J.A."/>
            <person name="Peterson S.N."/>
            <person name="Wessels M.R."/>
            <person name="Paulsen I.T."/>
            <person name="Nelson K.E."/>
            <person name="Margarit I."/>
            <person name="Read T.D."/>
            <person name="Madoff L.C."/>
            <person name="Wolf A.M."/>
            <person name="Beanan M.J."/>
            <person name="Brinkac L.M."/>
            <person name="Daugherty S.C."/>
            <person name="DeBoy R.T."/>
            <person name="Durkin A.S."/>
            <person name="Kolonay J.F."/>
            <person name="Madupu R."/>
            <person name="Lewis M.R."/>
            <person name="Radune D."/>
            <person name="Fedorova N.B."/>
            <person name="Scanlan D."/>
            <person name="Khouri H.M."/>
            <person name="Mulligan S."/>
            <person name="Carty H.A."/>
            <person name="Cline R.T."/>
            <person name="Van Aken S.E."/>
            <person name="Gill J."/>
            <person name="Scarselli M."/>
            <person name="Mora M."/>
            <person name="Iacobini E.T."/>
            <person name="Brettoni C."/>
            <person name="Galli G."/>
            <person name="Mariani M."/>
            <person name="Vegni F."/>
            <person name="Maione D."/>
            <person name="Rinaudo D."/>
            <person name="Rappuoli R."/>
            <person name="Telford J.L."/>
            <person name="Kasper D.L."/>
            <person name="Grandi G."/>
            <person name="Fraser C.M."/>
        </authorList>
    </citation>
    <scope>NUCLEOTIDE SEQUENCE [LARGE SCALE GENOMIC DNA]</scope>
    <source>
        <strain>ATCC BAA-611 / 2603 V/R</strain>
    </source>
</reference>
<feature type="chain" id="PRO_0000131602" description="Small ribosomal subunit protein uS5">
    <location>
        <begin position="1"/>
        <end position="164"/>
    </location>
</feature>
<feature type="domain" description="S5 DRBM" evidence="1">
    <location>
        <begin position="10"/>
        <end position="73"/>
    </location>
</feature>
<protein>
    <recommendedName>
        <fullName evidence="1">Small ribosomal subunit protein uS5</fullName>
    </recommendedName>
    <alternativeName>
        <fullName evidence="2">30S ribosomal protein S5</fullName>
    </alternativeName>
</protein>
<name>RS5_STRA5</name>
<evidence type="ECO:0000255" key="1">
    <source>
        <dbReference type="HAMAP-Rule" id="MF_01307"/>
    </source>
</evidence>
<evidence type="ECO:0000305" key="2"/>
<gene>
    <name evidence="1" type="primary">rpsE</name>
    <name type="ordered locus">SAG0075</name>
</gene>
<dbReference type="EMBL" id="AE009948">
    <property type="protein sequence ID" value="AAM98983.1"/>
    <property type="molecule type" value="Genomic_DNA"/>
</dbReference>
<dbReference type="RefSeq" id="NP_687111.1">
    <property type="nucleotide sequence ID" value="NC_004116.1"/>
</dbReference>
<dbReference type="RefSeq" id="WP_000874200.1">
    <property type="nucleotide sequence ID" value="NC_004116.1"/>
</dbReference>
<dbReference type="SMR" id="Q8E2B7"/>
<dbReference type="STRING" id="208435.SAG0075"/>
<dbReference type="GeneID" id="66885035"/>
<dbReference type="KEGG" id="sag:SAG0075"/>
<dbReference type="PATRIC" id="fig|208435.3.peg.74"/>
<dbReference type="HOGENOM" id="CLU_065898_2_2_9"/>
<dbReference type="OrthoDB" id="9809045at2"/>
<dbReference type="Proteomes" id="UP000000821">
    <property type="component" value="Chromosome"/>
</dbReference>
<dbReference type="GO" id="GO:0015935">
    <property type="term" value="C:small ribosomal subunit"/>
    <property type="evidence" value="ECO:0007669"/>
    <property type="project" value="InterPro"/>
</dbReference>
<dbReference type="GO" id="GO:0019843">
    <property type="term" value="F:rRNA binding"/>
    <property type="evidence" value="ECO:0007669"/>
    <property type="project" value="UniProtKB-UniRule"/>
</dbReference>
<dbReference type="GO" id="GO:0003735">
    <property type="term" value="F:structural constituent of ribosome"/>
    <property type="evidence" value="ECO:0007669"/>
    <property type="project" value="InterPro"/>
</dbReference>
<dbReference type="GO" id="GO:0006412">
    <property type="term" value="P:translation"/>
    <property type="evidence" value="ECO:0007669"/>
    <property type="project" value="UniProtKB-UniRule"/>
</dbReference>
<dbReference type="FunFam" id="3.30.160.20:FF:000001">
    <property type="entry name" value="30S ribosomal protein S5"/>
    <property type="match status" value="1"/>
</dbReference>
<dbReference type="FunFam" id="3.30.230.10:FF:000002">
    <property type="entry name" value="30S ribosomal protein S5"/>
    <property type="match status" value="1"/>
</dbReference>
<dbReference type="Gene3D" id="3.30.160.20">
    <property type="match status" value="1"/>
</dbReference>
<dbReference type="Gene3D" id="3.30.230.10">
    <property type="match status" value="1"/>
</dbReference>
<dbReference type="HAMAP" id="MF_01307_B">
    <property type="entry name" value="Ribosomal_uS5_B"/>
    <property type="match status" value="1"/>
</dbReference>
<dbReference type="InterPro" id="IPR020568">
    <property type="entry name" value="Ribosomal_Su5_D2-typ_SF"/>
</dbReference>
<dbReference type="InterPro" id="IPR000851">
    <property type="entry name" value="Ribosomal_uS5"/>
</dbReference>
<dbReference type="InterPro" id="IPR005712">
    <property type="entry name" value="Ribosomal_uS5_bac-type"/>
</dbReference>
<dbReference type="InterPro" id="IPR005324">
    <property type="entry name" value="Ribosomal_uS5_C"/>
</dbReference>
<dbReference type="InterPro" id="IPR013810">
    <property type="entry name" value="Ribosomal_uS5_N"/>
</dbReference>
<dbReference type="InterPro" id="IPR018192">
    <property type="entry name" value="Ribosomal_uS5_N_CS"/>
</dbReference>
<dbReference type="InterPro" id="IPR014721">
    <property type="entry name" value="Ribsml_uS5_D2-typ_fold_subgr"/>
</dbReference>
<dbReference type="NCBIfam" id="TIGR01021">
    <property type="entry name" value="rpsE_bact"/>
    <property type="match status" value="1"/>
</dbReference>
<dbReference type="PANTHER" id="PTHR48277">
    <property type="entry name" value="MITOCHONDRIAL RIBOSOMAL PROTEIN S5"/>
    <property type="match status" value="1"/>
</dbReference>
<dbReference type="PANTHER" id="PTHR48277:SF1">
    <property type="entry name" value="MITOCHONDRIAL RIBOSOMAL PROTEIN S5"/>
    <property type="match status" value="1"/>
</dbReference>
<dbReference type="Pfam" id="PF00333">
    <property type="entry name" value="Ribosomal_S5"/>
    <property type="match status" value="1"/>
</dbReference>
<dbReference type="Pfam" id="PF03719">
    <property type="entry name" value="Ribosomal_S5_C"/>
    <property type="match status" value="1"/>
</dbReference>
<dbReference type="SUPFAM" id="SSF54768">
    <property type="entry name" value="dsRNA-binding domain-like"/>
    <property type="match status" value="1"/>
</dbReference>
<dbReference type="SUPFAM" id="SSF54211">
    <property type="entry name" value="Ribosomal protein S5 domain 2-like"/>
    <property type="match status" value="1"/>
</dbReference>
<dbReference type="PROSITE" id="PS00585">
    <property type="entry name" value="RIBOSOMAL_S5"/>
    <property type="match status" value="1"/>
</dbReference>
<dbReference type="PROSITE" id="PS50881">
    <property type="entry name" value="S5_DSRBD"/>
    <property type="match status" value="1"/>
</dbReference>
<proteinExistence type="inferred from homology"/>
<accession>Q8E2B7</accession>
<organism>
    <name type="scientific">Streptococcus agalactiae serotype V (strain ATCC BAA-611 / 2603 V/R)</name>
    <dbReference type="NCBI Taxonomy" id="208435"/>
    <lineage>
        <taxon>Bacteria</taxon>
        <taxon>Bacillati</taxon>
        <taxon>Bacillota</taxon>
        <taxon>Bacilli</taxon>
        <taxon>Lactobacillales</taxon>
        <taxon>Streptococcaceae</taxon>
        <taxon>Streptococcus</taxon>
    </lineage>
</organism>
<comment type="function">
    <text evidence="1">With S4 and S12 plays an important role in translational accuracy.</text>
</comment>
<comment type="function">
    <text evidence="1">Located at the back of the 30S subunit body where it stabilizes the conformation of the head with respect to the body.</text>
</comment>
<comment type="subunit">
    <text evidence="1">Part of the 30S ribosomal subunit. Contacts proteins S4 and S8.</text>
</comment>
<comment type="domain">
    <text>The N-terminal domain interacts with the head of the 30S subunit; the C-terminal domain interacts with the body and contacts protein S4. The interaction surface between S4 and S5 is involved in control of translational fidelity.</text>
</comment>
<comment type="similarity">
    <text evidence="1">Belongs to the universal ribosomal protein uS5 family.</text>
</comment>
<sequence length="164" mass="17091">MAFKDNAVELEERVVAINRVTKVVKGGRRLRFAALVVVGDRNGRVGFGTGKAQEVPEAIRKAVEAAKKNMVEVPMVGTTIPHEVRSEFGGAKVLLKPAVEGAGVAAGGAVRAVIELAGVADITSKSLGSNTPINIVRATVEGLKQLKRAEEVAALRGISVSDLA</sequence>
<keyword id="KW-1185">Reference proteome</keyword>
<keyword id="KW-0687">Ribonucleoprotein</keyword>
<keyword id="KW-0689">Ribosomal protein</keyword>
<keyword id="KW-0694">RNA-binding</keyword>
<keyword id="KW-0699">rRNA-binding</keyword>